<name>GSH1_SALTI</name>
<feature type="chain" id="PRO_0000192538" description="Glutamate--cysteine ligase">
    <location>
        <begin position="1"/>
        <end position="518"/>
    </location>
</feature>
<organism>
    <name type="scientific">Salmonella typhi</name>
    <dbReference type="NCBI Taxonomy" id="90370"/>
    <lineage>
        <taxon>Bacteria</taxon>
        <taxon>Pseudomonadati</taxon>
        <taxon>Pseudomonadota</taxon>
        <taxon>Gammaproteobacteria</taxon>
        <taxon>Enterobacterales</taxon>
        <taxon>Enterobacteriaceae</taxon>
        <taxon>Salmonella</taxon>
    </lineage>
</organism>
<evidence type="ECO:0000255" key="1">
    <source>
        <dbReference type="HAMAP-Rule" id="MF_00578"/>
    </source>
</evidence>
<gene>
    <name evidence="1" type="primary">gshA</name>
    <name type="ordered locus">STY2944</name>
    <name type="ordered locus">t2715</name>
</gene>
<keyword id="KW-0067">ATP-binding</keyword>
<keyword id="KW-0317">Glutathione biosynthesis</keyword>
<keyword id="KW-0436">Ligase</keyword>
<keyword id="KW-0547">Nucleotide-binding</keyword>
<proteinExistence type="inferred from homology"/>
<protein>
    <recommendedName>
        <fullName evidence="1">Glutamate--cysteine ligase</fullName>
        <ecNumber evidence="1">6.3.2.2</ecNumber>
    </recommendedName>
    <alternativeName>
        <fullName evidence="1">Gamma-ECS</fullName>
        <shortName evidence="1">GCS</shortName>
    </alternativeName>
    <alternativeName>
        <fullName evidence="1">Gamma-glutamylcysteine synthetase</fullName>
    </alternativeName>
</protein>
<reference key="1">
    <citation type="journal article" date="2001" name="Nature">
        <title>Complete genome sequence of a multiple drug resistant Salmonella enterica serovar Typhi CT18.</title>
        <authorList>
            <person name="Parkhill J."/>
            <person name="Dougan G."/>
            <person name="James K.D."/>
            <person name="Thomson N.R."/>
            <person name="Pickard D."/>
            <person name="Wain J."/>
            <person name="Churcher C.M."/>
            <person name="Mungall K.L."/>
            <person name="Bentley S.D."/>
            <person name="Holden M.T.G."/>
            <person name="Sebaihia M."/>
            <person name="Baker S."/>
            <person name="Basham D."/>
            <person name="Brooks K."/>
            <person name="Chillingworth T."/>
            <person name="Connerton P."/>
            <person name="Cronin A."/>
            <person name="Davis P."/>
            <person name="Davies R.M."/>
            <person name="Dowd L."/>
            <person name="White N."/>
            <person name="Farrar J."/>
            <person name="Feltwell T."/>
            <person name="Hamlin N."/>
            <person name="Haque A."/>
            <person name="Hien T.T."/>
            <person name="Holroyd S."/>
            <person name="Jagels K."/>
            <person name="Krogh A."/>
            <person name="Larsen T.S."/>
            <person name="Leather S."/>
            <person name="Moule S."/>
            <person name="O'Gaora P."/>
            <person name="Parry C."/>
            <person name="Quail M.A."/>
            <person name="Rutherford K.M."/>
            <person name="Simmonds M."/>
            <person name="Skelton J."/>
            <person name="Stevens K."/>
            <person name="Whitehead S."/>
            <person name="Barrell B.G."/>
        </authorList>
    </citation>
    <scope>NUCLEOTIDE SEQUENCE [LARGE SCALE GENOMIC DNA]</scope>
    <source>
        <strain>CT18</strain>
    </source>
</reference>
<reference key="2">
    <citation type="journal article" date="2003" name="J. Bacteriol.">
        <title>Comparative genomics of Salmonella enterica serovar Typhi strains Ty2 and CT18.</title>
        <authorList>
            <person name="Deng W."/>
            <person name="Liou S.-R."/>
            <person name="Plunkett G. III"/>
            <person name="Mayhew G.F."/>
            <person name="Rose D.J."/>
            <person name="Burland V."/>
            <person name="Kodoyianni V."/>
            <person name="Schwartz D.C."/>
            <person name="Blattner F.R."/>
        </authorList>
    </citation>
    <scope>NUCLEOTIDE SEQUENCE [LARGE SCALE GENOMIC DNA]</scope>
    <source>
        <strain>ATCC 700931 / Ty2</strain>
    </source>
</reference>
<comment type="catalytic activity">
    <reaction evidence="1">
        <text>L-cysteine + L-glutamate + ATP = gamma-L-glutamyl-L-cysteine + ADP + phosphate + H(+)</text>
        <dbReference type="Rhea" id="RHEA:13285"/>
        <dbReference type="ChEBI" id="CHEBI:15378"/>
        <dbReference type="ChEBI" id="CHEBI:29985"/>
        <dbReference type="ChEBI" id="CHEBI:30616"/>
        <dbReference type="ChEBI" id="CHEBI:35235"/>
        <dbReference type="ChEBI" id="CHEBI:43474"/>
        <dbReference type="ChEBI" id="CHEBI:58173"/>
        <dbReference type="ChEBI" id="CHEBI:456216"/>
        <dbReference type="EC" id="6.3.2.2"/>
    </reaction>
</comment>
<comment type="pathway">
    <text evidence="1">Sulfur metabolism; glutathione biosynthesis; glutathione from L-cysteine and L-glutamate: step 1/2.</text>
</comment>
<comment type="similarity">
    <text evidence="1">Belongs to the glutamate--cysteine ligase type 1 family. Type 1 subfamily.</text>
</comment>
<accession>Q8Z4D6</accession>
<sequence length="518" mass="58426">MIPDVSQALAWLEKHPQALKGIQRGLERETLRVNADGTLATTVHPEALGSALTHKWITTDFAEALLEFITPVDGDIQHMLTFMRDLHRYTARKLGDERMWPLSMPCYIAEGQDIELAQYGTSNTGRFKTLYREGLKNRYGALMQTISGVHYNFSLPMAFWQAKCGVTEGEAAKEKISAGYFRLIRNYYRFGWVIPYLFGASPAICSSFLQGKPTTLPFEKTDCGMYYLPYATSLRLSDLGYTNKSQSNLGITFNDLHEYVAGLKRAIKTPSEEYARIGVEKDGKRLQINSNVLQIENELYAPIRPKRVTRSGESPSDALLRGGIEYIEVRSLDINPFSPIGVDEQQVRFLDLFMVWCVLADAPEMSSDELLCTRTNWNRVILEGRKPGLTLGIGCETAQFPLPKVGKDLFRDLKRVAQTLDSIHGGEEYQKVCDELVACFDNPELTFSARILRSMIDEGIGGTGKAFGEAYRNLLREEPLEILQEEEFIAERDASVRRQQEIEAADTEPFAAWLAKHA</sequence>
<dbReference type="EC" id="6.3.2.2" evidence="1"/>
<dbReference type="EMBL" id="AL513382">
    <property type="protein sequence ID" value="CAD05929.1"/>
    <property type="molecule type" value="Genomic_DNA"/>
</dbReference>
<dbReference type="EMBL" id="AE014613">
    <property type="protein sequence ID" value="AAO70281.1"/>
    <property type="molecule type" value="Genomic_DNA"/>
</dbReference>
<dbReference type="RefSeq" id="NP_457216.1">
    <property type="nucleotide sequence ID" value="NC_003198.1"/>
</dbReference>
<dbReference type="RefSeq" id="WP_000611827.1">
    <property type="nucleotide sequence ID" value="NZ_WSUR01000031.1"/>
</dbReference>
<dbReference type="SMR" id="Q8Z4D6"/>
<dbReference type="STRING" id="220341.gene:17586834"/>
<dbReference type="KEGG" id="stt:t2715"/>
<dbReference type="KEGG" id="sty:STY2944"/>
<dbReference type="PATRIC" id="fig|220341.7.peg.2997"/>
<dbReference type="eggNOG" id="COG2918">
    <property type="taxonomic scope" value="Bacteria"/>
</dbReference>
<dbReference type="HOGENOM" id="CLU_020728_3_0_6"/>
<dbReference type="OMA" id="TRKNWNR"/>
<dbReference type="OrthoDB" id="9803907at2"/>
<dbReference type="UniPathway" id="UPA00142">
    <property type="reaction ID" value="UER00209"/>
</dbReference>
<dbReference type="Proteomes" id="UP000000541">
    <property type="component" value="Chromosome"/>
</dbReference>
<dbReference type="Proteomes" id="UP000002670">
    <property type="component" value="Chromosome"/>
</dbReference>
<dbReference type="GO" id="GO:0005829">
    <property type="term" value="C:cytosol"/>
    <property type="evidence" value="ECO:0007669"/>
    <property type="project" value="TreeGrafter"/>
</dbReference>
<dbReference type="GO" id="GO:0005524">
    <property type="term" value="F:ATP binding"/>
    <property type="evidence" value="ECO:0007669"/>
    <property type="project" value="UniProtKB-KW"/>
</dbReference>
<dbReference type="GO" id="GO:0004357">
    <property type="term" value="F:glutamate-cysteine ligase activity"/>
    <property type="evidence" value="ECO:0007669"/>
    <property type="project" value="UniProtKB-UniRule"/>
</dbReference>
<dbReference type="GO" id="GO:0046872">
    <property type="term" value="F:metal ion binding"/>
    <property type="evidence" value="ECO:0007669"/>
    <property type="project" value="TreeGrafter"/>
</dbReference>
<dbReference type="GO" id="GO:0006750">
    <property type="term" value="P:glutathione biosynthetic process"/>
    <property type="evidence" value="ECO:0007669"/>
    <property type="project" value="UniProtKB-UniRule"/>
</dbReference>
<dbReference type="FunFam" id="3.30.590.20:FF:000001">
    <property type="entry name" value="Glutamate--cysteine ligase"/>
    <property type="match status" value="1"/>
</dbReference>
<dbReference type="Gene3D" id="3.30.590.20">
    <property type="match status" value="1"/>
</dbReference>
<dbReference type="HAMAP" id="MF_00578">
    <property type="entry name" value="Glu_cys_ligase"/>
    <property type="match status" value="1"/>
</dbReference>
<dbReference type="InterPro" id="IPR014746">
    <property type="entry name" value="Gln_synth/guanido_kin_cat_dom"/>
</dbReference>
<dbReference type="InterPro" id="IPR007370">
    <property type="entry name" value="Glu_cys_ligase"/>
</dbReference>
<dbReference type="InterPro" id="IPR006334">
    <property type="entry name" value="Glut_cys_ligase"/>
</dbReference>
<dbReference type="NCBIfam" id="TIGR01434">
    <property type="entry name" value="glu_cys_ligase"/>
    <property type="match status" value="1"/>
</dbReference>
<dbReference type="PANTHER" id="PTHR38761">
    <property type="entry name" value="GLUTAMATE--CYSTEINE LIGASE"/>
    <property type="match status" value="1"/>
</dbReference>
<dbReference type="PANTHER" id="PTHR38761:SF1">
    <property type="entry name" value="GLUTAMATE--CYSTEINE LIGASE"/>
    <property type="match status" value="1"/>
</dbReference>
<dbReference type="Pfam" id="PF04262">
    <property type="entry name" value="Glu_cys_ligase"/>
    <property type="match status" value="1"/>
</dbReference>
<dbReference type="SUPFAM" id="SSF55931">
    <property type="entry name" value="Glutamine synthetase/guanido kinase"/>
    <property type="match status" value="1"/>
</dbReference>